<protein>
    <recommendedName>
        <fullName evidence="1">Small COPII coat GTPase SAR1</fullName>
        <ecNumber evidence="1">3.6.5.2</ecNumber>
    </recommendedName>
</protein>
<reference key="1">
    <citation type="submission" date="1996-05" db="EMBL/GenBank/DDBJ databases">
        <authorList>
            <person name="Shen W.H."/>
            <person name="Gigot C."/>
        </authorList>
    </citation>
    <scope>NUCLEOTIDE SEQUENCE [MRNA]</scope>
    <source>
        <strain>cv. Bright Yellow 2</strain>
    </source>
</reference>
<sequence length="198" mass="22933">MFLVDWFYGILATLGLWQKEAKILFLGLDNAGKTTLLHMLKDERLVQHQPTQYPTSEELSIGKIKFKAFDLGGHQIARRVWKDYYAKVDAVVYLVDSFDKERFAESKKELDALLSGWSSLAHCFLFLDNWVTRIEHPICCLRKMNWRYHMGANGASPLARGKVNLADSNVRPVEVFMCSIVRQMGYGEGFRWMSQYIK</sequence>
<organism>
    <name type="scientific">Nicotiana tabacum</name>
    <name type="common">Common tobacco</name>
    <dbReference type="NCBI Taxonomy" id="4097"/>
    <lineage>
        <taxon>Eukaryota</taxon>
        <taxon>Viridiplantae</taxon>
        <taxon>Streptophyta</taxon>
        <taxon>Embryophyta</taxon>
        <taxon>Tracheophyta</taxon>
        <taxon>Spermatophyta</taxon>
        <taxon>Magnoliopsida</taxon>
        <taxon>eudicotyledons</taxon>
        <taxon>Gunneridae</taxon>
        <taxon>Pentapetalae</taxon>
        <taxon>asterids</taxon>
        <taxon>lamiids</taxon>
        <taxon>Solanales</taxon>
        <taxon>Solanaceae</taxon>
        <taxon>Nicotianoideae</taxon>
        <taxon>Nicotianeae</taxon>
        <taxon>Nicotiana</taxon>
    </lineage>
</organism>
<feature type="chain" id="PRO_0000206270" description="Small COPII coat GTPase SAR1">
    <location>
        <begin position="1"/>
        <end position="198"/>
    </location>
</feature>
<feature type="region of interest" description="Mediates recruitment to ER membranes" evidence="2">
    <location>
        <begin position="10"/>
        <end position="14"/>
    </location>
</feature>
<feature type="short sequence motif" description="STAR; SAR1-N-terminal activation recruitment. Required for the activation and subsequent recruitment to ER membrane" evidence="2">
    <location>
        <begin position="2"/>
        <end position="4"/>
    </location>
</feature>
<feature type="binding site" evidence="1">
    <location>
        <position position="29"/>
    </location>
    <ligand>
        <name>Mg(2+)</name>
        <dbReference type="ChEBI" id="CHEBI:18420"/>
    </ligand>
</feature>
<feature type="binding site" evidence="1">
    <location>
        <position position="30"/>
    </location>
    <ligand>
        <name>GDP</name>
        <dbReference type="ChEBI" id="CHEBI:58189"/>
    </ligand>
</feature>
<feature type="binding site" evidence="3">
    <location>
        <position position="30"/>
    </location>
    <ligand>
        <name>GTP</name>
        <dbReference type="ChEBI" id="CHEBI:37565"/>
    </ligand>
</feature>
<feature type="binding site" evidence="1">
    <location>
        <position position="31"/>
    </location>
    <ligand>
        <name>GDP</name>
        <dbReference type="ChEBI" id="CHEBI:58189"/>
    </ligand>
</feature>
<feature type="binding site" evidence="1">
    <location>
        <position position="32"/>
    </location>
    <ligand>
        <name>GDP</name>
        <dbReference type="ChEBI" id="CHEBI:58189"/>
    </ligand>
</feature>
<feature type="binding site" evidence="3">
    <location>
        <position position="32"/>
    </location>
    <ligand>
        <name>GTP</name>
        <dbReference type="ChEBI" id="CHEBI:37565"/>
    </ligand>
</feature>
<feature type="binding site" evidence="1">
    <location>
        <position position="33"/>
    </location>
    <ligand>
        <name>GDP</name>
        <dbReference type="ChEBI" id="CHEBI:58189"/>
    </ligand>
</feature>
<feature type="binding site" evidence="3">
    <location>
        <position position="33"/>
    </location>
    <ligand>
        <name>GTP</name>
        <dbReference type="ChEBI" id="CHEBI:37565"/>
    </ligand>
</feature>
<feature type="binding site" evidence="1">
    <location>
        <position position="34"/>
    </location>
    <ligand>
        <name>GDP</name>
        <dbReference type="ChEBI" id="CHEBI:58189"/>
    </ligand>
</feature>
<feature type="binding site" evidence="3">
    <location>
        <position position="34"/>
    </location>
    <ligand>
        <name>GTP</name>
        <dbReference type="ChEBI" id="CHEBI:37565"/>
    </ligand>
</feature>
<feature type="binding site" evidence="1">
    <location>
        <position position="35"/>
    </location>
    <ligand>
        <name>GDP</name>
        <dbReference type="ChEBI" id="CHEBI:58189"/>
    </ligand>
</feature>
<feature type="binding site" evidence="3">
    <location>
        <position position="35"/>
    </location>
    <ligand>
        <name>GTP</name>
        <dbReference type="ChEBI" id="CHEBI:37565"/>
    </ligand>
</feature>
<feature type="binding site" evidence="1">
    <location>
        <position position="70"/>
    </location>
    <ligand>
        <name>Mg(2+)</name>
        <dbReference type="ChEBI" id="CHEBI:18420"/>
    </ligand>
</feature>
<feature type="binding site" evidence="1">
    <location>
        <position position="129"/>
    </location>
    <ligand>
        <name>GDP</name>
        <dbReference type="ChEBI" id="CHEBI:58189"/>
    </ligand>
</feature>
<feature type="binding site" evidence="3">
    <location>
        <position position="129"/>
    </location>
    <ligand>
        <name>GTP</name>
        <dbReference type="ChEBI" id="CHEBI:37565"/>
    </ligand>
</feature>
<feature type="binding site" evidence="1">
    <location>
        <position position="180"/>
    </location>
    <ligand>
        <name>GDP</name>
        <dbReference type="ChEBI" id="CHEBI:58189"/>
    </ligand>
</feature>
<feature type="binding site" evidence="3">
    <location>
        <position position="180"/>
    </location>
    <ligand>
        <name>GTP</name>
        <dbReference type="ChEBI" id="CHEBI:37565"/>
    </ligand>
</feature>
<gene>
    <name type="primary">SAR1</name>
</gene>
<evidence type="ECO:0000250" key="1">
    <source>
        <dbReference type="UniProtKB" id="Q9NR31"/>
    </source>
</evidence>
<evidence type="ECO:0000250" key="2">
    <source>
        <dbReference type="UniProtKB" id="Q9QVY3"/>
    </source>
</evidence>
<evidence type="ECO:0000250" key="3">
    <source>
        <dbReference type="UniProtKB" id="Q9Y6B6"/>
    </source>
</evidence>
<evidence type="ECO:0000305" key="4"/>
<proteinExistence type="evidence at transcript level"/>
<keyword id="KW-0963">Cytoplasm</keyword>
<keyword id="KW-0256">Endoplasmic reticulum</keyword>
<keyword id="KW-0931">ER-Golgi transport</keyword>
<keyword id="KW-0333">Golgi apparatus</keyword>
<keyword id="KW-0342">GTP-binding</keyword>
<keyword id="KW-0378">Hydrolase</keyword>
<keyword id="KW-0460">Magnesium</keyword>
<keyword id="KW-0472">Membrane</keyword>
<keyword id="KW-0479">Metal-binding</keyword>
<keyword id="KW-0547">Nucleotide-binding</keyword>
<keyword id="KW-0653">Protein transport</keyword>
<keyword id="KW-1185">Reference proteome</keyword>
<keyword id="KW-0813">Transport</keyword>
<comment type="function">
    <text evidence="1">Small GTPase that cycles between an active GTP-bound and an inactive GDP-bound state and mainly functions in vesicle-mediated endoplasmic reticulum (ER) to Golgi transport. The active GTP-bound form inserts into the endoplasmic reticulum membrane where it recruits the remainder of the coat protein complex II/COPII. The coat protein complex II assembling and polymerizing on endoplasmic reticulum membrane is responsible for both the sorting of cargos and the deformation and budding of membranes into vesicles destined to the Golgi.</text>
</comment>
<comment type="catalytic activity">
    <reaction evidence="1">
        <text>GTP + H2O = GDP + phosphate + H(+)</text>
        <dbReference type="Rhea" id="RHEA:19669"/>
        <dbReference type="ChEBI" id="CHEBI:15377"/>
        <dbReference type="ChEBI" id="CHEBI:15378"/>
        <dbReference type="ChEBI" id="CHEBI:37565"/>
        <dbReference type="ChEBI" id="CHEBI:43474"/>
        <dbReference type="ChEBI" id="CHEBI:58189"/>
        <dbReference type="EC" id="3.6.5.2"/>
    </reaction>
    <physiologicalReaction direction="left-to-right" evidence="1">
        <dbReference type="Rhea" id="RHEA:19670"/>
    </physiologicalReaction>
</comment>
<comment type="activity regulation">
    <text evidence="1">Small GTPases activation is mediated by guanine exchange factors (GEF), while inactivation through hydrolysis of the bound GTP is stimulated by GTPase activating proteins (GAP).</text>
</comment>
<comment type="subunit">
    <text evidence="1">Homodimer; upon association with membrane. Part of the coat protein complex II/COPII, composed of SEC23/24 and SEC13/31 heterodimers, that it helps recruit and assemble on endoplasmic reticulum (ER) membranes at ER exit sites.</text>
</comment>
<comment type="subcellular location">
    <subcellularLocation>
        <location evidence="1">Endoplasmic reticulum membrane</location>
        <topology evidence="1">Peripheral membrane protein</topology>
    </subcellularLocation>
    <subcellularLocation>
        <location evidence="1">Golgi apparatus</location>
        <location evidence="1">Golgi stack membrane</location>
        <topology evidence="1">Peripheral membrane protein</topology>
    </subcellularLocation>
    <subcellularLocation>
        <location evidence="1">Cytoplasm</location>
        <location evidence="1">Cytosol</location>
    </subcellularLocation>
    <text evidence="1">Active at endoplasmic reticulum exit sites (ERES) where it inserts into the membrane and recruits the remainder of the coat protein complex II/COPII.</text>
</comment>
<comment type="similarity">
    <text evidence="4">Belongs to the small GTPase superfamily. SAR1 family.</text>
</comment>
<name>SAR1_TOBAC</name>
<dbReference type="EC" id="3.6.5.2" evidence="1"/>
<dbReference type="EMBL" id="X97967">
    <property type="protein sequence ID" value="CAA66610.1"/>
    <property type="molecule type" value="mRNA"/>
</dbReference>
<dbReference type="PIR" id="T03696">
    <property type="entry name" value="T03696"/>
</dbReference>
<dbReference type="SMR" id="P52885"/>
<dbReference type="STRING" id="4097.P52885"/>
<dbReference type="PaxDb" id="4097-P52885"/>
<dbReference type="Proteomes" id="UP000084051">
    <property type="component" value="Unplaced"/>
</dbReference>
<dbReference type="GO" id="GO:0030127">
    <property type="term" value="C:COPII vesicle coat"/>
    <property type="evidence" value="ECO:0000318"/>
    <property type="project" value="GO_Central"/>
</dbReference>
<dbReference type="GO" id="GO:0005829">
    <property type="term" value="C:cytosol"/>
    <property type="evidence" value="ECO:0007669"/>
    <property type="project" value="UniProtKB-SubCell"/>
</dbReference>
<dbReference type="GO" id="GO:0070971">
    <property type="term" value="C:endoplasmic reticulum exit site"/>
    <property type="evidence" value="ECO:0000318"/>
    <property type="project" value="GO_Central"/>
</dbReference>
<dbReference type="GO" id="GO:0005789">
    <property type="term" value="C:endoplasmic reticulum membrane"/>
    <property type="evidence" value="ECO:0007669"/>
    <property type="project" value="UniProtKB-SubCell"/>
</dbReference>
<dbReference type="GO" id="GO:0032580">
    <property type="term" value="C:Golgi cisterna membrane"/>
    <property type="evidence" value="ECO:0007669"/>
    <property type="project" value="UniProtKB-SubCell"/>
</dbReference>
<dbReference type="GO" id="GO:0005525">
    <property type="term" value="F:GTP binding"/>
    <property type="evidence" value="ECO:0007669"/>
    <property type="project" value="UniProtKB-KW"/>
</dbReference>
<dbReference type="GO" id="GO:0003924">
    <property type="term" value="F:GTPase activity"/>
    <property type="evidence" value="ECO:0000318"/>
    <property type="project" value="GO_Central"/>
</dbReference>
<dbReference type="GO" id="GO:0046872">
    <property type="term" value="F:metal ion binding"/>
    <property type="evidence" value="ECO:0007669"/>
    <property type="project" value="UniProtKB-KW"/>
</dbReference>
<dbReference type="GO" id="GO:0006888">
    <property type="term" value="P:endoplasmic reticulum to Golgi vesicle-mediated transport"/>
    <property type="evidence" value="ECO:0000318"/>
    <property type="project" value="GO_Central"/>
</dbReference>
<dbReference type="GO" id="GO:0006886">
    <property type="term" value="P:intracellular protein transport"/>
    <property type="evidence" value="ECO:0007669"/>
    <property type="project" value="InterPro"/>
</dbReference>
<dbReference type="GO" id="GO:0061024">
    <property type="term" value="P:membrane organization"/>
    <property type="evidence" value="ECO:0000318"/>
    <property type="project" value="GO_Central"/>
</dbReference>
<dbReference type="GO" id="GO:0003400">
    <property type="term" value="P:regulation of COPII vesicle coating"/>
    <property type="evidence" value="ECO:0000318"/>
    <property type="project" value="GO_Central"/>
</dbReference>
<dbReference type="GO" id="GO:0016050">
    <property type="term" value="P:vesicle organization"/>
    <property type="evidence" value="ECO:0000318"/>
    <property type="project" value="GO_Central"/>
</dbReference>
<dbReference type="CDD" id="cd00879">
    <property type="entry name" value="Sar1"/>
    <property type="match status" value="1"/>
</dbReference>
<dbReference type="FunFam" id="3.40.50.300:FF:000161">
    <property type="entry name" value="Small COPII coat GTPase"/>
    <property type="match status" value="1"/>
</dbReference>
<dbReference type="Gene3D" id="3.40.50.300">
    <property type="entry name" value="P-loop containing nucleotide triphosphate hydrolases"/>
    <property type="match status" value="1"/>
</dbReference>
<dbReference type="InterPro" id="IPR027417">
    <property type="entry name" value="P-loop_NTPase"/>
</dbReference>
<dbReference type="InterPro" id="IPR006689">
    <property type="entry name" value="Small_GTPase_ARF/SAR"/>
</dbReference>
<dbReference type="InterPro" id="IPR006687">
    <property type="entry name" value="Small_GTPase_SAR1"/>
</dbReference>
<dbReference type="PANTHER" id="PTHR45684">
    <property type="entry name" value="RE74312P"/>
    <property type="match status" value="1"/>
</dbReference>
<dbReference type="Pfam" id="PF00025">
    <property type="entry name" value="Arf"/>
    <property type="match status" value="1"/>
</dbReference>
<dbReference type="PRINTS" id="PR00328">
    <property type="entry name" value="SAR1GTPBP"/>
</dbReference>
<dbReference type="SMART" id="SM00177">
    <property type="entry name" value="ARF"/>
    <property type="match status" value="1"/>
</dbReference>
<dbReference type="SMART" id="SM00178">
    <property type="entry name" value="SAR"/>
    <property type="match status" value="1"/>
</dbReference>
<dbReference type="SUPFAM" id="SSF52540">
    <property type="entry name" value="P-loop containing nucleoside triphosphate hydrolases"/>
    <property type="match status" value="1"/>
</dbReference>
<dbReference type="PROSITE" id="PS51422">
    <property type="entry name" value="SAR1"/>
    <property type="match status" value="1"/>
</dbReference>
<accession>P52885</accession>